<proteinExistence type="inferred from homology"/>
<accession>A1B011</accession>
<keyword id="KW-0488">Methylation</keyword>
<keyword id="KW-1185">Reference proteome</keyword>
<keyword id="KW-0687">Ribonucleoprotein</keyword>
<keyword id="KW-0689">Ribosomal protein</keyword>
<keyword id="KW-0694">RNA-binding</keyword>
<keyword id="KW-0699">rRNA-binding</keyword>
<reference key="1">
    <citation type="submission" date="2006-12" db="EMBL/GenBank/DDBJ databases">
        <title>Complete sequence of chromosome 1 of Paracoccus denitrificans PD1222.</title>
        <authorList>
            <person name="Copeland A."/>
            <person name="Lucas S."/>
            <person name="Lapidus A."/>
            <person name="Barry K."/>
            <person name="Detter J.C."/>
            <person name="Glavina del Rio T."/>
            <person name="Hammon N."/>
            <person name="Israni S."/>
            <person name="Dalin E."/>
            <person name="Tice H."/>
            <person name="Pitluck S."/>
            <person name="Munk A.C."/>
            <person name="Brettin T."/>
            <person name="Bruce D."/>
            <person name="Han C."/>
            <person name="Tapia R."/>
            <person name="Gilna P."/>
            <person name="Schmutz J."/>
            <person name="Larimer F."/>
            <person name="Land M."/>
            <person name="Hauser L."/>
            <person name="Kyrpides N."/>
            <person name="Lykidis A."/>
            <person name="Spiro S."/>
            <person name="Richardson D.J."/>
            <person name="Moir J.W.B."/>
            <person name="Ferguson S.J."/>
            <person name="van Spanning R.J.M."/>
            <person name="Richardson P."/>
        </authorList>
    </citation>
    <scope>NUCLEOTIDE SEQUENCE [LARGE SCALE GENOMIC DNA]</scope>
    <source>
        <strain>Pd 1222</strain>
    </source>
</reference>
<gene>
    <name evidence="1" type="primary">rplK</name>
    <name type="ordered locus">Pden_0743</name>
</gene>
<organism>
    <name type="scientific">Paracoccus denitrificans (strain Pd 1222)</name>
    <dbReference type="NCBI Taxonomy" id="318586"/>
    <lineage>
        <taxon>Bacteria</taxon>
        <taxon>Pseudomonadati</taxon>
        <taxon>Pseudomonadota</taxon>
        <taxon>Alphaproteobacteria</taxon>
        <taxon>Rhodobacterales</taxon>
        <taxon>Paracoccaceae</taxon>
        <taxon>Paracoccus</taxon>
    </lineage>
</organism>
<protein>
    <recommendedName>
        <fullName evidence="1">Large ribosomal subunit protein uL11</fullName>
    </recommendedName>
    <alternativeName>
        <fullName evidence="3">50S ribosomal protein L11</fullName>
    </alternativeName>
</protein>
<evidence type="ECO:0000255" key="1">
    <source>
        <dbReference type="HAMAP-Rule" id="MF_00736"/>
    </source>
</evidence>
<evidence type="ECO:0000256" key="2">
    <source>
        <dbReference type="SAM" id="MobiDB-lite"/>
    </source>
</evidence>
<evidence type="ECO:0000305" key="3"/>
<feature type="chain" id="PRO_1000046233" description="Large ribosomal subunit protein uL11">
    <location>
        <begin position="1"/>
        <end position="150"/>
    </location>
</feature>
<feature type="region of interest" description="Disordered" evidence="2">
    <location>
        <begin position="83"/>
        <end position="111"/>
    </location>
</feature>
<comment type="function">
    <text evidence="1">Forms part of the ribosomal stalk which helps the ribosome interact with GTP-bound translation factors.</text>
</comment>
<comment type="subunit">
    <text evidence="1">Part of the ribosomal stalk of the 50S ribosomal subunit. Interacts with L10 and the large rRNA to form the base of the stalk. L10 forms an elongated spine to which L12 dimers bind in a sequential fashion forming a multimeric L10(L12)X complex.</text>
</comment>
<comment type="PTM">
    <text evidence="1">One or more lysine residues are methylated.</text>
</comment>
<comment type="similarity">
    <text evidence="1">Belongs to the universal ribosomal protein uL11 family.</text>
</comment>
<sequence>MAKKVVGSLKLQIKAGQANPSPPVGPALGQRGINIMEFCKAFNAKTQEMEQGAPVPVVITYYADKSFTFETKTPPASFLLKKAAGLKPQGKRNRAKGSEKPGRQTAGTVTAKQVREIAEAKMKDLSANDVEAAMQIILGSARSIGIEVKG</sequence>
<dbReference type="EMBL" id="CP000489">
    <property type="protein sequence ID" value="ABL68855.1"/>
    <property type="molecule type" value="Genomic_DNA"/>
</dbReference>
<dbReference type="RefSeq" id="WP_011747088.1">
    <property type="nucleotide sequence ID" value="NC_008686.1"/>
</dbReference>
<dbReference type="SMR" id="A1B011"/>
<dbReference type="STRING" id="318586.Pden_0743"/>
<dbReference type="EnsemblBacteria" id="ABL68855">
    <property type="protein sequence ID" value="ABL68855"/>
    <property type="gene ID" value="Pden_0743"/>
</dbReference>
<dbReference type="GeneID" id="93451967"/>
<dbReference type="KEGG" id="pde:Pden_0743"/>
<dbReference type="eggNOG" id="COG0080">
    <property type="taxonomic scope" value="Bacteria"/>
</dbReference>
<dbReference type="HOGENOM" id="CLU_074237_2_0_5"/>
<dbReference type="OrthoDB" id="9802408at2"/>
<dbReference type="Proteomes" id="UP000000361">
    <property type="component" value="Chromosome 1"/>
</dbReference>
<dbReference type="GO" id="GO:0022625">
    <property type="term" value="C:cytosolic large ribosomal subunit"/>
    <property type="evidence" value="ECO:0007669"/>
    <property type="project" value="TreeGrafter"/>
</dbReference>
<dbReference type="GO" id="GO:0070180">
    <property type="term" value="F:large ribosomal subunit rRNA binding"/>
    <property type="evidence" value="ECO:0007669"/>
    <property type="project" value="UniProtKB-UniRule"/>
</dbReference>
<dbReference type="GO" id="GO:0003735">
    <property type="term" value="F:structural constituent of ribosome"/>
    <property type="evidence" value="ECO:0007669"/>
    <property type="project" value="InterPro"/>
</dbReference>
<dbReference type="GO" id="GO:0006412">
    <property type="term" value="P:translation"/>
    <property type="evidence" value="ECO:0007669"/>
    <property type="project" value="UniProtKB-UniRule"/>
</dbReference>
<dbReference type="CDD" id="cd00349">
    <property type="entry name" value="Ribosomal_L11"/>
    <property type="match status" value="1"/>
</dbReference>
<dbReference type="FunFam" id="1.10.10.250:FF:000001">
    <property type="entry name" value="50S ribosomal protein L11"/>
    <property type="match status" value="1"/>
</dbReference>
<dbReference type="FunFam" id="3.30.1550.10:FF:000001">
    <property type="entry name" value="50S ribosomal protein L11"/>
    <property type="match status" value="1"/>
</dbReference>
<dbReference type="Gene3D" id="1.10.10.250">
    <property type="entry name" value="Ribosomal protein L11, C-terminal domain"/>
    <property type="match status" value="1"/>
</dbReference>
<dbReference type="Gene3D" id="3.30.1550.10">
    <property type="entry name" value="Ribosomal protein L11/L12, N-terminal domain"/>
    <property type="match status" value="1"/>
</dbReference>
<dbReference type="HAMAP" id="MF_00736">
    <property type="entry name" value="Ribosomal_uL11"/>
    <property type="match status" value="1"/>
</dbReference>
<dbReference type="InterPro" id="IPR000911">
    <property type="entry name" value="Ribosomal_uL11"/>
</dbReference>
<dbReference type="InterPro" id="IPR006519">
    <property type="entry name" value="Ribosomal_uL11_bac-typ"/>
</dbReference>
<dbReference type="InterPro" id="IPR020783">
    <property type="entry name" value="Ribosomal_uL11_C"/>
</dbReference>
<dbReference type="InterPro" id="IPR036769">
    <property type="entry name" value="Ribosomal_uL11_C_sf"/>
</dbReference>
<dbReference type="InterPro" id="IPR020784">
    <property type="entry name" value="Ribosomal_uL11_N"/>
</dbReference>
<dbReference type="InterPro" id="IPR036796">
    <property type="entry name" value="Ribosomal_uL11_N_sf"/>
</dbReference>
<dbReference type="NCBIfam" id="TIGR01632">
    <property type="entry name" value="L11_bact"/>
    <property type="match status" value="1"/>
</dbReference>
<dbReference type="PANTHER" id="PTHR11661">
    <property type="entry name" value="60S RIBOSOMAL PROTEIN L12"/>
    <property type="match status" value="1"/>
</dbReference>
<dbReference type="PANTHER" id="PTHR11661:SF1">
    <property type="entry name" value="LARGE RIBOSOMAL SUBUNIT PROTEIN UL11M"/>
    <property type="match status" value="1"/>
</dbReference>
<dbReference type="Pfam" id="PF00298">
    <property type="entry name" value="Ribosomal_L11"/>
    <property type="match status" value="1"/>
</dbReference>
<dbReference type="Pfam" id="PF03946">
    <property type="entry name" value="Ribosomal_L11_N"/>
    <property type="match status" value="1"/>
</dbReference>
<dbReference type="SMART" id="SM00649">
    <property type="entry name" value="RL11"/>
    <property type="match status" value="1"/>
</dbReference>
<dbReference type="SUPFAM" id="SSF54747">
    <property type="entry name" value="Ribosomal L11/L12e N-terminal domain"/>
    <property type="match status" value="1"/>
</dbReference>
<dbReference type="SUPFAM" id="SSF46906">
    <property type="entry name" value="Ribosomal protein L11, C-terminal domain"/>
    <property type="match status" value="1"/>
</dbReference>
<name>RL11_PARDP</name>